<gene>
    <name evidence="1" type="primary">mdtA</name>
    <name type="ordered locus">SeHA_C2356</name>
</gene>
<dbReference type="EMBL" id="CP001120">
    <property type="protein sequence ID" value="ACF69645.1"/>
    <property type="molecule type" value="Genomic_DNA"/>
</dbReference>
<dbReference type="RefSeq" id="WP_000678817.1">
    <property type="nucleotide sequence ID" value="NC_011083.1"/>
</dbReference>
<dbReference type="SMR" id="B4T9U0"/>
<dbReference type="KEGG" id="seh:SeHA_C2356"/>
<dbReference type="HOGENOM" id="CLU_018816_2_0_6"/>
<dbReference type="Proteomes" id="UP000001866">
    <property type="component" value="Chromosome"/>
</dbReference>
<dbReference type="GO" id="GO:1990281">
    <property type="term" value="C:efflux pump complex"/>
    <property type="evidence" value="ECO:0007669"/>
    <property type="project" value="TreeGrafter"/>
</dbReference>
<dbReference type="GO" id="GO:0005886">
    <property type="term" value="C:plasma membrane"/>
    <property type="evidence" value="ECO:0007669"/>
    <property type="project" value="UniProtKB-SubCell"/>
</dbReference>
<dbReference type="GO" id="GO:0015562">
    <property type="term" value="F:efflux transmembrane transporter activity"/>
    <property type="evidence" value="ECO:0007669"/>
    <property type="project" value="TreeGrafter"/>
</dbReference>
<dbReference type="FunFam" id="2.40.420.20:FF:000001">
    <property type="entry name" value="Efflux RND transporter periplasmic adaptor subunit"/>
    <property type="match status" value="1"/>
</dbReference>
<dbReference type="FunFam" id="1.10.287.470:FF:000005">
    <property type="entry name" value="Multidrug resistance protein MdtA"/>
    <property type="match status" value="1"/>
</dbReference>
<dbReference type="FunFam" id="2.40.30.170:FF:000006">
    <property type="entry name" value="Multidrug resistance protein MdtA"/>
    <property type="match status" value="1"/>
</dbReference>
<dbReference type="Gene3D" id="2.40.30.170">
    <property type="match status" value="1"/>
</dbReference>
<dbReference type="Gene3D" id="2.40.420.20">
    <property type="match status" value="1"/>
</dbReference>
<dbReference type="Gene3D" id="2.40.50.100">
    <property type="match status" value="1"/>
</dbReference>
<dbReference type="Gene3D" id="1.10.287.470">
    <property type="entry name" value="Helix hairpin bin"/>
    <property type="match status" value="1"/>
</dbReference>
<dbReference type="HAMAP" id="MF_01422">
    <property type="entry name" value="MdtA"/>
    <property type="match status" value="1"/>
</dbReference>
<dbReference type="InterPro" id="IPR032317">
    <property type="entry name" value="CusB_D23"/>
</dbReference>
<dbReference type="InterPro" id="IPR022824">
    <property type="entry name" value="Multidrug-R_MdtA"/>
</dbReference>
<dbReference type="InterPro" id="IPR006143">
    <property type="entry name" value="RND_pump_MFP"/>
</dbReference>
<dbReference type="NCBIfam" id="NF008589">
    <property type="entry name" value="PRK11556.1"/>
    <property type="match status" value="1"/>
</dbReference>
<dbReference type="NCBIfam" id="TIGR01730">
    <property type="entry name" value="RND_mfp"/>
    <property type="match status" value="1"/>
</dbReference>
<dbReference type="PANTHER" id="PTHR30469">
    <property type="entry name" value="MULTIDRUG RESISTANCE PROTEIN MDTA"/>
    <property type="match status" value="1"/>
</dbReference>
<dbReference type="PANTHER" id="PTHR30469:SF12">
    <property type="entry name" value="MULTIDRUG RESISTANCE PROTEIN MDTA"/>
    <property type="match status" value="1"/>
</dbReference>
<dbReference type="Pfam" id="PF16576">
    <property type="entry name" value="HlyD_D23"/>
    <property type="match status" value="1"/>
</dbReference>
<dbReference type="SUPFAM" id="SSF111369">
    <property type="entry name" value="HlyD-like secretion proteins"/>
    <property type="match status" value="1"/>
</dbReference>
<name>MDTA_SALHS</name>
<organism>
    <name type="scientific">Salmonella heidelberg (strain SL476)</name>
    <dbReference type="NCBI Taxonomy" id="454169"/>
    <lineage>
        <taxon>Bacteria</taxon>
        <taxon>Pseudomonadati</taxon>
        <taxon>Pseudomonadota</taxon>
        <taxon>Gammaproteobacteria</taxon>
        <taxon>Enterobacterales</taxon>
        <taxon>Enterobacteriaceae</taxon>
        <taxon>Salmonella</taxon>
    </lineage>
</organism>
<reference key="1">
    <citation type="journal article" date="2011" name="J. Bacteriol.">
        <title>Comparative genomics of 28 Salmonella enterica isolates: evidence for CRISPR-mediated adaptive sublineage evolution.</title>
        <authorList>
            <person name="Fricke W.F."/>
            <person name="Mammel M.K."/>
            <person name="McDermott P.F."/>
            <person name="Tartera C."/>
            <person name="White D.G."/>
            <person name="Leclerc J.E."/>
            <person name="Ravel J."/>
            <person name="Cebula T.A."/>
        </authorList>
    </citation>
    <scope>NUCLEOTIDE SEQUENCE [LARGE SCALE GENOMIC DNA]</scope>
    <source>
        <strain>SL476</strain>
    </source>
</reference>
<accession>B4T9U0</accession>
<protein>
    <recommendedName>
        <fullName evidence="1">Multidrug resistance protein MdtA</fullName>
    </recommendedName>
    <alternativeName>
        <fullName evidence="1">Multidrug transporter MdtA</fullName>
    </alternativeName>
</protein>
<comment type="subunit">
    <text evidence="1">Part of a tripartite efflux system composed of MdtA, MdtB and MdtC.</text>
</comment>
<comment type="subcellular location">
    <subcellularLocation>
        <location evidence="1">Cell inner membrane</location>
        <topology evidence="1">Peripheral membrane protein</topology>
    </subcellularLocation>
</comment>
<comment type="similarity">
    <text evidence="1">Belongs to the membrane fusion protein (MFP) (TC 8.A.1) family.</text>
</comment>
<proteinExistence type="inferred from homology"/>
<feature type="signal peptide" evidence="1">
    <location>
        <begin position="1"/>
        <end position="20"/>
    </location>
</feature>
<feature type="chain" id="PRO_1000145642" description="Multidrug resistance protein MdtA">
    <location>
        <begin position="21"/>
        <end position="413"/>
    </location>
</feature>
<feature type="region of interest" description="Disordered" evidence="2">
    <location>
        <begin position="31"/>
        <end position="57"/>
    </location>
</feature>
<feature type="region of interest" description="Disordered" evidence="2">
    <location>
        <begin position="392"/>
        <end position="413"/>
    </location>
</feature>
<feature type="compositionally biased region" description="Basic and acidic residues" evidence="2">
    <location>
        <begin position="397"/>
        <end position="413"/>
    </location>
</feature>
<evidence type="ECO:0000255" key="1">
    <source>
        <dbReference type="HAMAP-Rule" id="MF_01422"/>
    </source>
</evidence>
<evidence type="ECO:0000256" key="2">
    <source>
        <dbReference type="SAM" id="MobiDB-lite"/>
    </source>
</evidence>
<sequence>MKGSNTFRWAIAIGVVVAAAAFWFWHSRSESPTAAPGVAAQAPHTAAAGRRGMRDGPLAPVQAATATTQAVPRYLSGLGTVTAANTVTVRSRVDGQLIALHFQEGQQVNAGDLLAQIDPSQFKVALAQAQGQLAKDNATLANARRDLARYQQLAKTNLVSRQELDAQQALVNETQGTIKADEANVASAQLQLDWSRITAPVSGRVGLKQVDVGNQISSSDTAGIVVITQTHPIDLIFTLPESDIATVVQAQKAGKTLVVEAWDRTNSHKLSEGVLLSLDNQIDPTTGTIKIKARFTNQDDTLFPNQFVNARMLVDTEQNAVVVPAAAVQMGNEGHFVWVLNDENNVSKMRVKIGIQDNQNVVISAGLSAGDRVVTDGIDRLTEGAKVEVVEPQTTMADEKSPSRHEGQKGARA</sequence>
<keyword id="KW-0997">Cell inner membrane</keyword>
<keyword id="KW-1003">Cell membrane</keyword>
<keyword id="KW-0472">Membrane</keyword>
<keyword id="KW-0677">Repeat</keyword>
<keyword id="KW-0732">Signal</keyword>
<keyword id="KW-0813">Transport</keyword>